<reference key="1">
    <citation type="journal article" date="2007" name="Proc. Natl. Acad. Sci. U.S.A.">
        <title>The Orientia tsutsugamushi genome reveals massive proliferation of conjugative type IV secretion system and host-cell interaction genes.</title>
        <authorList>
            <person name="Cho N.-H."/>
            <person name="Kim H.-R."/>
            <person name="Lee J.-H."/>
            <person name="Kim S.-Y."/>
            <person name="Kim J."/>
            <person name="Cha S."/>
            <person name="Kim S.-Y."/>
            <person name="Darby A.C."/>
            <person name="Fuxelius H.-H."/>
            <person name="Yin J."/>
            <person name="Kim J.H."/>
            <person name="Kim J."/>
            <person name="Lee S.J."/>
            <person name="Koh Y.-S."/>
            <person name="Jang W.-J."/>
            <person name="Park K.-H."/>
            <person name="Andersson S.G.E."/>
            <person name="Choi M.-S."/>
            <person name="Kim I.-S."/>
        </authorList>
    </citation>
    <scope>NUCLEOTIDE SEQUENCE [LARGE SCALE GENOMIC DNA]</scope>
    <source>
        <strain>Boryong</strain>
    </source>
</reference>
<name>MNME_ORITB</name>
<protein>
    <recommendedName>
        <fullName evidence="1">tRNA modification GTPase MnmE</fullName>
        <ecNumber evidence="1">3.6.-.-</ecNumber>
    </recommendedName>
</protein>
<feature type="chain" id="PRO_0000345859" description="tRNA modification GTPase MnmE">
    <location>
        <begin position="1"/>
        <end position="447"/>
    </location>
</feature>
<feature type="domain" description="TrmE-type G">
    <location>
        <begin position="217"/>
        <end position="373"/>
    </location>
</feature>
<feature type="binding site" evidence="1">
    <location>
        <position position="22"/>
    </location>
    <ligand>
        <name>(6S)-5-formyl-5,6,7,8-tetrahydrofolate</name>
        <dbReference type="ChEBI" id="CHEBI:57457"/>
    </ligand>
</feature>
<feature type="binding site" evidence="1">
    <location>
        <position position="81"/>
    </location>
    <ligand>
        <name>(6S)-5-formyl-5,6,7,8-tetrahydrofolate</name>
        <dbReference type="ChEBI" id="CHEBI:57457"/>
    </ligand>
</feature>
<feature type="binding site" evidence="1">
    <location>
        <position position="121"/>
    </location>
    <ligand>
        <name>(6S)-5-formyl-5,6,7,8-tetrahydrofolate</name>
        <dbReference type="ChEBI" id="CHEBI:57457"/>
    </ligand>
</feature>
<feature type="binding site" evidence="1">
    <location>
        <begin position="227"/>
        <end position="232"/>
    </location>
    <ligand>
        <name>GTP</name>
        <dbReference type="ChEBI" id="CHEBI:37565"/>
    </ligand>
</feature>
<feature type="binding site" evidence="1">
    <location>
        <position position="227"/>
    </location>
    <ligand>
        <name>K(+)</name>
        <dbReference type="ChEBI" id="CHEBI:29103"/>
    </ligand>
</feature>
<feature type="binding site" evidence="1">
    <location>
        <position position="231"/>
    </location>
    <ligand>
        <name>Mg(2+)</name>
        <dbReference type="ChEBI" id="CHEBI:18420"/>
    </ligand>
</feature>
<feature type="binding site" evidence="1">
    <location>
        <begin position="246"/>
        <end position="252"/>
    </location>
    <ligand>
        <name>GTP</name>
        <dbReference type="ChEBI" id="CHEBI:37565"/>
    </ligand>
</feature>
<feature type="binding site" evidence="1">
    <location>
        <position position="246"/>
    </location>
    <ligand>
        <name>K(+)</name>
        <dbReference type="ChEBI" id="CHEBI:29103"/>
    </ligand>
</feature>
<feature type="binding site" evidence="1">
    <location>
        <position position="248"/>
    </location>
    <ligand>
        <name>K(+)</name>
        <dbReference type="ChEBI" id="CHEBI:29103"/>
    </ligand>
</feature>
<feature type="binding site" evidence="1">
    <location>
        <position position="251"/>
    </location>
    <ligand>
        <name>K(+)</name>
        <dbReference type="ChEBI" id="CHEBI:29103"/>
    </ligand>
</feature>
<feature type="binding site" evidence="1">
    <location>
        <position position="252"/>
    </location>
    <ligand>
        <name>Mg(2+)</name>
        <dbReference type="ChEBI" id="CHEBI:18420"/>
    </ligand>
</feature>
<feature type="binding site" evidence="1">
    <location>
        <begin position="271"/>
        <end position="274"/>
    </location>
    <ligand>
        <name>GTP</name>
        <dbReference type="ChEBI" id="CHEBI:37565"/>
    </ligand>
</feature>
<feature type="binding site" evidence="1">
    <location>
        <position position="447"/>
    </location>
    <ligand>
        <name>(6S)-5-formyl-5,6,7,8-tetrahydrofolate</name>
        <dbReference type="ChEBI" id="CHEBI:57457"/>
    </ligand>
</feature>
<gene>
    <name evidence="1" type="primary">mnmE</name>
    <name evidence="1" type="synonym">trmE</name>
    <name type="ordered locus">OTBS_2149</name>
</gene>
<sequence length="447" mass="49855">MTSKTIFAQSSAKGKAGVAVFRISGSLSLLIVERLCGKFNIVPRKVYYRTIRCYATSQVIDKALIVYFKGEQSFTGEDVVEIHTHGSVAVAKMLTRSILECDGIRLAEPGEFAKRAFLNGKMDLTMAEGLVDLIESETLMQHKQAIRQMEGELEKLYSHWRGMLIKILSFIEGYIDFPDEEIPQSVLREAKSIINNLTREISNHLGDTRKGEVLRHGIVLAITGETNTGKSSLLNYLTMREAAIVSDIPGTTRDVIEAHLDIGGYPIIVRDTAGIRESDDPIEQEGIKRSLVAFKNSDIRILMIDATNINSVNQTIAHLLNDVYTIIVINKIDLVNYKYDSSILPCDKPIVAVSLLKQVGLDRLMSEIVSYAEKIADPGNVPAITRERYRNSLNKALELLQLVNLENDLVLAAEDLRMAIRYLEHITGKIKIDDILAEIFASFCIGK</sequence>
<proteinExistence type="inferred from homology"/>
<comment type="function">
    <text evidence="1">Exhibits a very high intrinsic GTPase hydrolysis rate. Involved in the addition of a carboxymethylaminomethyl (cmnm) group at the wobble position (U34) of certain tRNAs, forming tRNA-cmnm(5)s(2)U34.</text>
</comment>
<comment type="cofactor">
    <cofactor evidence="1">
        <name>K(+)</name>
        <dbReference type="ChEBI" id="CHEBI:29103"/>
    </cofactor>
    <text evidence="1">Binds 1 potassium ion per subunit.</text>
</comment>
<comment type="subunit">
    <text evidence="1">Homodimer. Heterotetramer of two MnmE and two MnmG subunits.</text>
</comment>
<comment type="subcellular location">
    <subcellularLocation>
        <location evidence="1">Cytoplasm</location>
    </subcellularLocation>
</comment>
<comment type="similarity">
    <text evidence="1">Belongs to the TRAFAC class TrmE-Era-EngA-EngB-Septin-like GTPase superfamily. TrmE GTPase family.</text>
</comment>
<accession>A5CFM7</accession>
<organism>
    <name type="scientific">Orientia tsutsugamushi (strain Boryong)</name>
    <name type="common">Rickettsia tsutsugamushi</name>
    <dbReference type="NCBI Taxonomy" id="357244"/>
    <lineage>
        <taxon>Bacteria</taxon>
        <taxon>Pseudomonadati</taxon>
        <taxon>Pseudomonadota</taxon>
        <taxon>Alphaproteobacteria</taxon>
        <taxon>Rickettsiales</taxon>
        <taxon>Rickettsiaceae</taxon>
        <taxon>Rickettsieae</taxon>
        <taxon>Orientia</taxon>
    </lineage>
</organism>
<keyword id="KW-0963">Cytoplasm</keyword>
<keyword id="KW-0342">GTP-binding</keyword>
<keyword id="KW-0378">Hydrolase</keyword>
<keyword id="KW-0460">Magnesium</keyword>
<keyword id="KW-0479">Metal-binding</keyword>
<keyword id="KW-0547">Nucleotide-binding</keyword>
<keyword id="KW-0630">Potassium</keyword>
<keyword id="KW-1185">Reference proteome</keyword>
<keyword id="KW-0819">tRNA processing</keyword>
<dbReference type="EC" id="3.6.-.-" evidence="1"/>
<dbReference type="EMBL" id="AM494475">
    <property type="protein sequence ID" value="CAM81244.1"/>
    <property type="molecule type" value="Genomic_DNA"/>
</dbReference>
<dbReference type="RefSeq" id="WP_011945169.1">
    <property type="nucleotide sequence ID" value="NC_009488.1"/>
</dbReference>
<dbReference type="SMR" id="A5CFM7"/>
<dbReference type="KEGG" id="ots:OTBS_2149"/>
<dbReference type="eggNOG" id="COG0486">
    <property type="taxonomic scope" value="Bacteria"/>
</dbReference>
<dbReference type="HOGENOM" id="CLU_019624_3_1_5"/>
<dbReference type="Proteomes" id="UP000001565">
    <property type="component" value="Chromosome"/>
</dbReference>
<dbReference type="GO" id="GO:0005737">
    <property type="term" value="C:cytoplasm"/>
    <property type="evidence" value="ECO:0007669"/>
    <property type="project" value="UniProtKB-SubCell"/>
</dbReference>
<dbReference type="GO" id="GO:0005525">
    <property type="term" value="F:GTP binding"/>
    <property type="evidence" value="ECO:0007669"/>
    <property type="project" value="UniProtKB-UniRule"/>
</dbReference>
<dbReference type="GO" id="GO:0003924">
    <property type="term" value="F:GTPase activity"/>
    <property type="evidence" value="ECO:0007669"/>
    <property type="project" value="UniProtKB-UniRule"/>
</dbReference>
<dbReference type="GO" id="GO:0046872">
    <property type="term" value="F:metal ion binding"/>
    <property type="evidence" value="ECO:0007669"/>
    <property type="project" value="UniProtKB-KW"/>
</dbReference>
<dbReference type="GO" id="GO:0030488">
    <property type="term" value="P:tRNA methylation"/>
    <property type="evidence" value="ECO:0007669"/>
    <property type="project" value="TreeGrafter"/>
</dbReference>
<dbReference type="GO" id="GO:0002098">
    <property type="term" value="P:tRNA wobble uridine modification"/>
    <property type="evidence" value="ECO:0007669"/>
    <property type="project" value="TreeGrafter"/>
</dbReference>
<dbReference type="CDD" id="cd04164">
    <property type="entry name" value="trmE"/>
    <property type="match status" value="1"/>
</dbReference>
<dbReference type="CDD" id="cd14858">
    <property type="entry name" value="TrmE_N"/>
    <property type="match status" value="1"/>
</dbReference>
<dbReference type="FunFam" id="3.30.1360.120:FF:000007">
    <property type="entry name" value="tRNA modification GTPase GTPBP3, mitochondrial"/>
    <property type="match status" value="1"/>
</dbReference>
<dbReference type="Gene3D" id="3.40.50.300">
    <property type="entry name" value="P-loop containing nucleotide triphosphate hydrolases"/>
    <property type="match status" value="1"/>
</dbReference>
<dbReference type="Gene3D" id="3.30.1360.120">
    <property type="entry name" value="Probable tRNA modification gtpase trme, domain 1"/>
    <property type="match status" value="1"/>
</dbReference>
<dbReference type="Gene3D" id="1.20.120.430">
    <property type="entry name" value="tRNA modification GTPase MnmE domain 2"/>
    <property type="match status" value="1"/>
</dbReference>
<dbReference type="HAMAP" id="MF_00379">
    <property type="entry name" value="GTPase_MnmE"/>
    <property type="match status" value="1"/>
</dbReference>
<dbReference type="InterPro" id="IPR031168">
    <property type="entry name" value="G_TrmE"/>
</dbReference>
<dbReference type="InterPro" id="IPR006073">
    <property type="entry name" value="GTP-bd"/>
</dbReference>
<dbReference type="InterPro" id="IPR018948">
    <property type="entry name" value="GTP-bd_TrmE_N"/>
</dbReference>
<dbReference type="InterPro" id="IPR004520">
    <property type="entry name" value="GTPase_MnmE"/>
</dbReference>
<dbReference type="InterPro" id="IPR027368">
    <property type="entry name" value="MnmE_dom2"/>
</dbReference>
<dbReference type="InterPro" id="IPR025867">
    <property type="entry name" value="MnmE_helical"/>
</dbReference>
<dbReference type="InterPro" id="IPR027417">
    <property type="entry name" value="P-loop_NTPase"/>
</dbReference>
<dbReference type="InterPro" id="IPR005225">
    <property type="entry name" value="Small_GTP-bd"/>
</dbReference>
<dbReference type="InterPro" id="IPR027266">
    <property type="entry name" value="TrmE/GcvT_dom1"/>
</dbReference>
<dbReference type="NCBIfam" id="TIGR00450">
    <property type="entry name" value="mnmE_trmE_thdF"/>
    <property type="match status" value="1"/>
</dbReference>
<dbReference type="NCBIfam" id="NF003661">
    <property type="entry name" value="PRK05291.1-3"/>
    <property type="match status" value="1"/>
</dbReference>
<dbReference type="NCBIfam" id="TIGR00231">
    <property type="entry name" value="small_GTP"/>
    <property type="match status" value="1"/>
</dbReference>
<dbReference type="PANTHER" id="PTHR42714">
    <property type="entry name" value="TRNA MODIFICATION GTPASE GTPBP3"/>
    <property type="match status" value="1"/>
</dbReference>
<dbReference type="PANTHER" id="PTHR42714:SF2">
    <property type="entry name" value="TRNA MODIFICATION GTPASE GTPBP3, MITOCHONDRIAL"/>
    <property type="match status" value="1"/>
</dbReference>
<dbReference type="Pfam" id="PF01926">
    <property type="entry name" value="MMR_HSR1"/>
    <property type="match status" value="1"/>
</dbReference>
<dbReference type="Pfam" id="PF12631">
    <property type="entry name" value="MnmE_helical"/>
    <property type="match status" value="1"/>
</dbReference>
<dbReference type="Pfam" id="PF10396">
    <property type="entry name" value="TrmE_N"/>
    <property type="match status" value="1"/>
</dbReference>
<dbReference type="SUPFAM" id="SSF52540">
    <property type="entry name" value="P-loop containing nucleoside triphosphate hydrolases"/>
    <property type="match status" value="1"/>
</dbReference>
<dbReference type="PROSITE" id="PS51709">
    <property type="entry name" value="G_TRME"/>
    <property type="match status" value="1"/>
</dbReference>
<evidence type="ECO:0000255" key="1">
    <source>
        <dbReference type="HAMAP-Rule" id="MF_00379"/>
    </source>
</evidence>